<feature type="chain" id="PRO_0000139870" description="Ribonuclease PH">
    <location>
        <begin position="1"/>
        <end position="243"/>
    </location>
</feature>
<feature type="binding site" evidence="1">
    <location>
        <position position="84"/>
    </location>
    <ligand>
        <name>phosphate</name>
        <dbReference type="ChEBI" id="CHEBI:43474"/>
        <note>substrate</note>
    </ligand>
</feature>
<feature type="binding site" evidence="1">
    <location>
        <begin position="122"/>
        <end position="124"/>
    </location>
    <ligand>
        <name>phosphate</name>
        <dbReference type="ChEBI" id="CHEBI:43474"/>
        <note>substrate</note>
    </ligand>
</feature>
<gene>
    <name evidence="1" type="primary">rph</name>
    <name type="ordered locus">Bd2700</name>
</gene>
<organism>
    <name type="scientific">Bdellovibrio bacteriovorus (strain ATCC 15356 / DSM 50701 / NCIMB 9529 / HD100)</name>
    <dbReference type="NCBI Taxonomy" id="264462"/>
    <lineage>
        <taxon>Bacteria</taxon>
        <taxon>Pseudomonadati</taxon>
        <taxon>Bdellovibrionota</taxon>
        <taxon>Bdellovibrionia</taxon>
        <taxon>Bdellovibrionales</taxon>
        <taxon>Pseudobdellovibrionaceae</taxon>
        <taxon>Bdellovibrio</taxon>
    </lineage>
</organism>
<keyword id="KW-0548">Nucleotidyltransferase</keyword>
<keyword id="KW-1185">Reference proteome</keyword>
<keyword id="KW-0694">RNA-binding</keyword>
<keyword id="KW-0698">rRNA processing</keyword>
<keyword id="KW-0808">Transferase</keyword>
<keyword id="KW-0819">tRNA processing</keyword>
<keyword id="KW-0820">tRNA-binding</keyword>
<evidence type="ECO:0000255" key="1">
    <source>
        <dbReference type="HAMAP-Rule" id="MF_00564"/>
    </source>
</evidence>
<proteinExistence type="inferred from homology"/>
<protein>
    <recommendedName>
        <fullName evidence="1">Ribonuclease PH</fullName>
        <shortName evidence="1">RNase PH</shortName>
        <ecNumber evidence="1">2.7.7.56</ecNumber>
    </recommendedName>
    <alternativeName>
        <fullName evidence="1">tRNA nucleotidyltransferase</fullName>
    </alternativeName>
</protein>
<name>RNPH_BDEBA</name>
<reference key="1">
    <citation type="journal article" date="2004" name="Science">
        <title>A predator unmasked: life cycle of Bdellovibrio bacteriovorus from a genomic perspective.</title>
        <authorList>
            <person name="Rendulic S."/>
            <person name="Jagtap P."/>
            <person name="Rosinus A."/>
            <person name="Eppinger M."/>
            <person name="Baar C."/>
            <person name="Lanz C."/>
            <person name="Keller H."/>
            <person name="Lambert C."/>
            <person name="Evans K.J."/>
            <person name="Goesmann A."/>
            <person name="Meyer F."/>
            <person name="Sockett R.E."/>
            <person name="Schuster S.C."/>
        </authorList>
    </citation>
    <scope>NUCLEOTIDE SEQUENCE [LARGE SCALE GENOMIC DNA]</scope>
    <source>
        <strain>ATCC 15356 / DSM 50701 / NCIMB 9529 / HD100</strain>
    </source>
</reference>
<sequence>MRADGRLFDQLRNIKITPNVSEYAEGSAIVEFGRTKVLCTATYESKAPSWLLGTGAGWITAEYGMLPRSTHTRIRRDKSMTGGRTQEISRLIGRSLRAAVDLKQLGEKQIIIDCDVLNADGGTRTASVTGGFVALALALKKLHAVSEIKTLPLINYVSAISVGLHEGQILLDLNYDEDSAIGTDMNFVMTDKGQFVEVQGTAEHVPFTRDQLFKMMDVAEKGCRELFIHQASVMGEIYKIAGA</sequence>
<comment type="function">
    <text evidence="1">Phosphorolytic 3'-5' exoribonuclease that plays an important role in tRNA 3'-end maturation. Removes nucleotide residues following the 3'-CCA terminus of tRNAs; can also add nucleotides to the ends of RNA molecules by using nucleoside diphosphates as substrates, but this may not be physiologically important. Probably plays a role in initiation of 16S rRNA degradation (leading to ribosome degradation) during starvation.</text>
</comment>
<comment type="catalytic activity">
    <reaction evidence="1">
        <text>tRNA(n+1) + phosphate = tRNA(n) + a ribonucleoside 5'-diphosphate</text>
        <dbReference type="Rhea" id="RHEA:10628"/>
        <dbReference type="Rhea" id="RHEA-COMP:17343"/>
        <dbReference type="Rhea" id="RHEA-COMP:17344"/>
        <dbReference type="ChEBI" id="CHEBI:43474"/>
        <dbReference type="ChEBI" id="CHEBI:57930"/>
        <dbReference type="ChEBI" id="CHEBI:173114"/>
        <dbReference type="EC" id="2.7.7.56"/>
    </reaction>
</comment>
<comment type="subunit">
    <text evidence="1">Homohexameric ring arranged as a trimer of dimers.</text>
</comment>
<comment type="similarity">
    <text evidence="1">Belongs to the RNase PH family.</text>
</comment>
<dbReference type="EC" id="2.7.7.56" evidence="1"/>
<dbReference type="EMBL" id="BX842653">
    <property type="protein sequence ID" value="CAE80491.1"/>
    <property type="molecule type" value="Genomic_DNA"/>
</dbReference>
<dbReference type="RefSeq" id="WP_011165094.1">
    <property type="nucleotide sequence ID" value="NC_005363.1"/>
</dbReference>
<dbReference type="SMR" id="Q6MJR9"/>
<dbReference type="STRING" id="264462.Bd2700"/>
<dbReference type="GeneID" id="93013590"/>
<dbReference type="KEGG" id="bba:Bd2700"/>
<dbReference type="eggNOG" id="COG0689">
    <property type="taxonomic scope" value="Bacteria"/>
</dbReference>
<dbReference type="HOGENOM" id="CLU_050858_0_0_7"/>
<dbReference type="Proteomes" id="UP000008080">
    <property type="component" value="Chromosome"/>
</dbReference>
<dbReference type="GO" id="GO:0000175">
    <property type="term" value="F:3'-5'-RNA exonuclease activity"/>
    <property type="evidence" value="ECO:0007669"/>
    <property type="project" value="UniProtKB-UniRule"/>
</dbReference>
<dbReference type="GO" id="GO:0000049">
    <property type="term" value="F:tRNA binding"/>
    <property type="evidence" value="ECO:0007669"/>
    <property type="project" value="UniProtKB-UniRule"/>
</dbReference>
<dbReference type="GO" id="GO:0009022">
    <property type="term" value="F:tRNA nucleotidyltransferase activity"/>
    <property type="evidence" value="ECO:0007669"/>
    <property type="project" value="UniProtKB-UniRule"/>
</dbReference>
<dbReference type="GO" id="GO:0016075">
    <property type="term" value="P:rRNA catabolic process"/>
    <property type="evidence" value="ECO:0007669"/>
    <property type="project" value="UniProtKB-UniRule"/>
</dbReference>
<dbReference type="GO" id="GO:0006364">
    <property type="term" value="P:rRNA processing"/>
    <property type="evidence" value="ECO:0007669"/>
    <property type="project" value="UniProtKB-KW"/>
</dbReference>
<dbReference type="GO" id="GO:0008033">
    <property type="term" value="P:tRNA processing"/>
    <property type="evidence" value="ECO:0007669"/>
    <property type="project" value="UniProtKB-UniRule"/>
</dbReference>
<dbReference type="CDD" id="cd11362">
    <property type="entry name" value="RNase_PH_bact"/>
    <property type="match status" value="1"/>
</dbReference>
<dbReference type="FunFam" id="3.30.230.70:FF:000003">
    <property type="entry name" value="Ribonuclease PH"/>
    <property type="match status" value="1"/>
</dbReference>
<dbReference type="Gene3D" id="3.30.230.70">
    <property type="entry name" value="GHMP Kinase, N-terminal domain"/>
    <property type="match status" value="1"/>
</dbReference>
<dbReference type="HAMAP" id="MF_00564">
    <property type="entry name" value="RNase_PH"/>
    <property type="match status" value="1"/>
</dbReference>
<dbReference type="InterPro" id="IPR001247">
    <property type="entry name" value="ExoRNase_PH_dom1"/>
</dbReference>
<dbReference type="InterPro" id="IPR015847">
    <property type="entry name" value="ExoRNase_PH_dom2"/>
</dbReference>
<dbReference type="InterPro" id="IPR036345">
    <property type="entry name" value="ExoRNase_PH_dom2_sf"/>
</dbReference>
<dbReference type="InterPro" id="IPR027408">
    <property type="entry name" value="PNPase/RNase_PH_dom_sf"/>
</dbReference>
<dbReference type="InterPro" id="IPR020568">
    <property type="entry name" value="Ribosomal_Su5_D2-typ_SF"/>
</dbReference>
<dbReference type="InterPro" id="IPR050080">
    <property type="entry name" value="RNase_PH"/>
</dbReference>
<dbReference type="InterPro" id="IPR002381">
    <property type="entry name" value="RNase_PH_bac-type"/>
</dbReference>
<dbReference type="InterPro" id="IPR018336">
    <property type="entry name" value="RNase_PH_CS"/>
</dbReference>
<dbReference type="NCBIfam" id="TIGR01966">
    <property type="entry name" value="RNasePH"/>
    <property type="match status" value="1"/>
</dbReference>
<dbReference type="PANTHER" id="PTHR11953">
    <property type="entry name" value="EXOSOME COMPLEX COMPONENT"/>
    <property type="match status" value="1"/>
</dbReference>
<dbReference type="PANTHER" id="PTHR11953:SF0">
    <property type="entry name" value="EXOSOME COMPLEX COMPONENT RRP41"/>
    <property type="match status" value="1"/>
</dbReference>
<dbReference type="Pfam" id="PF01138">
    <property type="entry name" value="RNase_PH"/>
    <property type="match status" value="1"/>
</dbReference>
<dbReference type="Pfam" id="PF03725">
    <property type="entry name" value="RNase_PH_C"/>
    <property type="match status" value="1"/>
</dbReference>
<dbReference type="SUPFAM" id="SSF55666">
    <property type="entry name" value="Ribonuclease PH domain 2-like"/>
    <property type="match status" value="1"/>
</dbReference>
<dbReference type="SUPFAM" id="SSF54211">
    <property type="entry name" value="Ribosomal protein S5 domain 2-like"/>
    <property type="match status" value="1"/>
</dbReference>
<dbReference type="PROSITE" id="PS01277">
    <property type="entry name" value="RIBONUCLEASE_PH"/>
    <property type="match status" value="1"/>
</dbReference>
<accession>Q6MJR9</accession>